<sequence>MKRYFVTGTDTDCGKTFVTNQLVNYFSSSAAIKPIASGCEYSKNQLVNSDALLHQQQNHLPLEIINPWRFRLPVSPHLSAREDGASIDVHKVADYCLNLQLNDIKKLFIEGAGGLMVPLNEQDTWLDFLKLTRIPVILVVGMKLGCINHTLLTQEVLEINKIKCQGWIANCLDQDMLMLDENISTLEAKLKYPLLARTNYGGKISDICLSSL</sequence>
<gene>
    <name evidence="1" type="primary">bioD</name>
    <name type="ordered locus">LPC_0889</name>
</gene>
<name>BIOD_LEGPC</name>
<comment type="function">
    <text evidence="1">Catalyzes a mechanistically unusual reaction, the ATP-dependent insertion of CO2 between the N7 and N8 nitrogen atoms of 7,8-diaminopelargonic acid (DAPA, also called 7,8-diammoniononanoate) to form a ureido ring.</text>
</comment>
<comment type="catalytic activity">
    <reaction evidence="1">
        <text>(7R,8S)-7,8-diammoniononanoate + CO2 + ATP = (4R,5S)-dethiobiotin + ADP + phosphate + 3 H(+)</text>
        <dbReference type="Rhea" id="RHEA:15805"/>
        <dbReference type="ChEBI" id="CHEBI:15378"/>
        <dbReference type="ChEBI" id="CHEBI:16526"/>
        <dbReference type="ChEBI" id="CHEBI:30616"/>
        <dbReference type="ChEBI" id="CHEBI:43474"/>
        <dbReference type="ChEBI" id="CHEBI:149469"/>
        <dbReference type="ChEBI" id="CHEBI:149473"/>
        <dbReference type="ChEBI" id="CHEBI:456216"/>
        <dbReference type="EC" id="6.3.3.3"/>
    </reaction>
</comment>
<comment type="cofactor">
    <cofactor evidence="1">
        <name>Mg(2+)</name>
        <dbReference type="ChEBI" id="CHEBI:18420"/>
    </cofactor>
</comment>
<comment type="pathway">
    <text evidence="1">Cofactor biosynthesis; biotin biosynthesis; biotin from 7,8-diaminononanoate: step 1/2.</text>
</comment>
<comment type="subunit">
    <text evidence="1">Homodimer.</text>
</comment>
<comment type="subcellular location">
    <subcellularLocation>
        <location evidence="1">Cytoplasm</location>
    </subcellularLocation>
</comment>
<comment type="similarity">
    <text evidence="1">Belongs to the dethiobiotin synthetase family.</text>
</comment>
<protein>
    <recommendedName>
        <fullName evidence="1">ATP-dependent dethiobiotin synthetase BioD</fullName>
        <ecNumber evidence="1">6.3.3.3</ecNumber>
    </recommendedName>
    <alternativeName>
        <fullName evidence="1">DTB synthetase</fullName>
        <shortName evidence="1">DTBS</shortName>
    </alternativeName>
    <alternativeName>
        <fullName evidence="1">Dethiobiotin synthase</fullName>
    </alternativeName>
</protein>
<proteinExistence type="inferred from homology"/>
<organism>
    <name type="scientific">Legionella pneumophila (strain Corby)</name>
    <dbReference type="NCBI Taxonomy" id="400673"/>
    <lineage>
        <taxon>Bacteria</taxon>
        <taxon>Pseudomonadati</taxon>
        <taxon>Pseudomonadota</taxon>
        <taxon>Gammaproteobacteria</taxon>
        <taxon>Legionellales</taxon>
        <taxon>Legionellaceae</taxon>
        <taxon>Legionella</taxon>
    </lineage>
</organism>
<dbReference type="EC" id="6.3.3.3" evidence="1"/>
<dbReference type="EMBL" id="CP000675">
    <property type="protein sequence ID" value="ABQ54865.1"/>
    <property type="molecule type" value="Genomic_DNA"/>
</dbReference>
<dbReference type="RefSeq" id="WP_011946476.1">
    <property type="nucleotide sequence ID" value="NZ_JAPMSS010000002.1"/>
</dbReference>
<dbReference type="SMR" id="A5IBW5"/>
<dbReference type="KEGG" id="lpc:LPC_0889"/>
<dbReference type="HOGENOM" id="CLU_072551_0_0_6"/>
<dbReference type="UniPathway" id="UPA00078">
    <property type="reaction ID" value="UER00161"/>
</dbReference>
<dbReference type="GO" id="GO:0005829">
    <property type="term" value="C:cytosol"/>
    <property type="evidence" value="ECO:0007669"/>
    <property type="project" value="TreeGrafter"/>
</dbReference>
<dbReference type="GO" id="GO:0005524">
    <property type="term" value="F:ATP binding"/>
    <property type="evidence" value="ECO:0007669"/>
    <property type="project" value="UniProtKB-UniRule"/>
</dbReference>
<dbReference type="GO" id="GO:0004141">
    <property type="term" value="F:dethiobiotin synthase activity"/>
    <property type="evidence" value="ECO:0007669"/>
    <property type="project" value="UniProtKB-UniRule"/>
</dbReference>
<dbReference type="GO" id="GO:0000287">
    <property type="term" value="F:magnesium ion binding"/>
    <property type="evidence" value="ECO:0007669"/>
    <property type="project" value="UniProtKB-UniRule"/>
</dbReference>
<dbReference type="GO" id="GO:0009102">
    <property type="term" value="P:biotin biosynthetic process"/>
    <property type="evidence" value="ECO:0007669"/>
    <property type="project" value="UniProtKB-UniRule"/>
</dbReference>
<dbReference type="CDD" id="cd03109">
    <property type="entry name" value="DTBS"/>
    <property type="match status" value="1"/>
</dbReference>
<dbReference type="FunFam" id="3.40.50.300:FF:000292">
    <property type="entry name" value="ATP-dependent dethiobiotin synthetase BioD"/>
    <property type="match status" value="1"/>
</dbReference>
<dbReference type="Gene3D" id="3.40.50.300">
    <property type="entry name" value="P-loop containing nucleotide triphosphate hydrolases"/>
    <property type="match status" value="1"/>
</dbReference>
<dbReference type="HAMAP" id="MF_00336">
    <property type="entry name" value="BioD"/>
    <property type="match status" value="1"/>
</dbReference>
<dbReference type="InterPro" id="IPR004472">
    <property type="entry name" value="DTB_synth_BioD"/>
</dbReference>
<dbReference type="InterPro" id="IPR027417">
    <property type="entry name" value="P-loop_NTPase"/>
</dbReference>
<dbReference type="NCBIfam" id="TIGR00347">
    <property type="entry name" value="bioD"/>
    <property type="match status" value="1"/>
</dbReference>
<dbReference type="PANTHER" id="PTHR43210">
    <property type="entry name" value="DETHIOBIOTIN SYNTHETASE"/>
    <property type="match status" value="1"/>
</dbReference>
<dbReference type="PANTHER" id="PTHR43210:SF5">
    <property type="entry name" value="DETHIOBIOTIN SYNTHETASE"/>
    <property type="match status" value="1"/>
</dbReference>
<dbReference type="Pfam" id="PF13500">
    <property type="entry name" value="AAA_26"/>
    <property type="match status" value="1"/>
</dbReference>
<dbReference type="PIRSF" id="PIRSF006755">
    <property type="entry name" value="DTB_synth"/>
    <property type="match status" value="1"/>
</dbReference>
<dbReference type="SUPFAM" id="SSF52540">
    <property type="entry name" value="P-loop containing nucleoside triphosphate hydrolases"/>
    <property type="match status" value="1"/>
</dbReference>
<evidence type="ECO:0000255" key="1">
    <source>
        <dbReference type="HAMAP-Rule" id="MF_00336"/>
    </source>
</evidence>
<accession>A5IBW5</accession>
<keyword id="KW-0067">ATP-binding</keyword>
<keyword id="KW-0093">Biotin biosynthesis</keyword>
<keyword id="KW-0963">Cytoplasm</keyword>
<keyword id="KW-0436">Ligase</keyword>
<keyword id="KW-0460">Magnesium</keyword>
<keyword id="KW-0479">Metal-binding</keyword>
<keyword id="KW-0547">Nucleotide-binding</keyword>
<reference key="1">
    <citation type="submission" date="2006-11" db="EMBL/GenBank/DDBJ databases">
        <title>Identification and characterization of a new conjugation/ type IVA secretion system (trb/tra) of L. pneumophila Corby localized on a mobile genomic island.</title>
        <authorList>
            <person name="Gloeckner G."/>
            <person name="Albert-Weissenberger C."/>
            <person name="Weinmann E."/>
            <person name="Jacobi S."/>
            <person name="Schunder E."/>
            <person name="Steinert M."/>
            <person name="Buchrieser C."/>
            <person name="Hacker J."/>
            <person name="Heuner K."/>
        </authorList>
    </citation>
    <scope>NUCLEOTIDE SEQUENCE [LARGE SCALE GENOMIC DNA]</scope>
    <source>
        <strain>Corby</strain>
    </source>
</reference>
<feature type="chain" id="PRO_1000019562" description="ATP-dependent dethiobiotin synthetase BioD">
    <location>
        <begin position="1"/>
        <end position="212"/>
    </location>
</feature>
<feature type="active site" evidence="1">
    <location>
        <position position="33"/>
    </location>
</feature>
<feature type="binding site" evidence="1">
    <location>
        <begin position="12"/>
        <end position="17"/>
    </location>
    <ligand>
        <name>ATP</name>
        <dbReference type="ChEBI" id="CHEBI:30616"/>
    </ligand>
</feature>
<feature type="binding site" evidence="1">
    <location>
        <position position="16"/>
    </location>
    <ligand>
        <name>Mg(2+)</name>
        <dbReference type="ChEBI" id="CHEBI:18420"/>
    </ligand>
</feature>
<feature type="binding site" evidence="1">
    <location>
        <position position="37"/>
    </location>
    <ligand>
        <name>substrate</name>
    </ligand>
</feature>
<feature type="binding site" evidence="1">
    <location>
        <position position="50"/>
    </location>
    <ligand>
        <name>ATP</name>
        <dbReference type="ChEBI" id="CHEBI:30616"/>
    </ligand>
</feature>
<feature type="binding site" evidence="1">
    <location>
        <position position="50"/>
    </location>
    <ligand>
        <name>Mg(2+)</name>
        <dbReference type="ChEBI" id="CHEBI:18420"/>
    </ligand>
</feature>
<feature type="binding site" evidence="1">
    <location>
        <begin position="110"/>
        <end position="113"/>
    </location>
    <ligand>
        <name>ATP</name>
        <dbReference type="ChEBI" id="CHEBI:30616"/>
    </ligand>
</feature>
<feature type="binding site" evidence="1">
    <location>
        <position position="110"/>
    </location>
    <ligand>
        <name>Mg(2+)</name>
        <dbReference type="ChEBI" id="CHEBI:18420"/>
    </ligand>
</feature>
<feature type="binding site" evidence="1">
    <location>
        <begin position="170"/>
        <end position="171"/>
    </location>
    <ligand>
        <name>ATP</name>
        <dbReference type="ChEBI" id="CHEBI:30616"/>
    </ligand>
</feature>